<dbReference type="EMBL" id="AY302220">
    <property type="protein sequence ID" value="AAP43113.1"/>
    <property type="molecule type" value="mRNA"/>
</dbReference>
<dbReference type="RefSeq" id="NP_001233713.1">
    <property type="nucleotide sequence ID" value="NM_001246784.1"/>
</dbReference>
<dbReference type="SMR" id="Q7TSU0"/>
<dbReference type="PaxDb" id="10029-NP_001233713.1"/>
<dbReference type="GeneID" id="100689353"/>
<dbReference type="KEGG" id="cge:100689353"/>
<dbReference type="CTD" id="10438"/>
<dbReference type="eggNOG" id="KOG4835">
    <property type="taxonomic scope" value="Eukaryota"/>
</dbReference>
<dbReference type="OrthoDB" id="1421013at2759"/>
<dbReference type="Proteomes" id="UP000694386">
    <property type="component" value="Unplaced"/>
</dbReference>
<dbReference type="Proteomes" id="UP001108280">
    <property type="component" value="Chromosome 1"/>
</dbReference>
<dbReference type="GO" id="GO:0005737">
    <property type="term" value="C:cytoplasm"/>
    <property type="evidence" value="ECO:0007669"/>
    <property type="project" value="UniProtKB-SubCell"/>
</dbReference>
<dbReference type="GO" id="GO:0000178">
    <property type="term" value="C:exosome (RNase complex)"/>
    <property type="evidence" value="ECO:0007669"/>
    <property type="project" value="TreeGrafter"/>
</dbReference>
<dbReference type="GO" id="GO:0005730">
    <property type="term" value="C:nucleolus"/>
    <property type="evidence" value="ECO:0007669"/>
    <property type="project" value="UniProtKB-SubCell"/>
</dbReference>
<dbReference type="GO" id="GO:0003677">
    <property type="term" value="F:DNA binding"/>
    <property type="evidence" value="ECO:0007669"/>
    <property type="project" value="UniProtKB-KW"/>
</dbReference>
<dbReference type="GO" id="GO:0003723">
    <property type="term" value="F:RNA binding"/>
    <property type="evidence" value="ECO:0007669"/>
    <property type="project" value="UniProtKB-KW"/>
</dbReference>
<dbReference type="GO" id="GO:0006915">
    <property type="term" value="P:apoptotic process"/>
    <property type="evidence" value="ECO:0007669"/>
    <property type="project" value="UniProtKB-KW"/>
</dbReference>
<dbReference type="GO" id="GO:0000460">
    <property type="term" value="P:maturation of 5.8S rRNA"/>
    <property type="evidence" value="ECO:0007669"/>
    <property type="project" value="TreeGrafter"/>
</dbReference>
<dbReference type="GO" id="GO:0010468">
    <property type="term" value="P:regulation of gene expression"/>
    <property type="evidence" value="ECO:0007669"/>
    <property type="project" value="TreeGrafter"/>
</dbReference>
<dbReference type="InterPro" id="IPR011082">
    <property type="entry name" value="Exosome-assoc_fac/DNA_repair"/>
</dbReference>
<dbReference type="InterPro" id="IPR007146">
    <property type="entry name" value="Sas10/Utp3/C1D"/>
</dbReference>
<dbReference type="PANTHER" id="PTHR15341:SF3">
    <property type="entry name" value="NUCLEAR NUCLEIC ACID-BINDING PROTEIN C1D"/>
    <property type="match status" value="1"/>
</dbReference>
<dbReference type="PANTHER" id="PTHR15341">
    <property type="entry name" value="SUN-COR STEROID HORMONE RECEPTOR CO-REPRESSOR"/>
    <property type="match status" value="1"/>
</dbReference>
<dbReference type="Pfam" id="PF04000">
    <property type="entry name" value="Sas10_Utp3"/>
    <property type="match status" value="1"/>
</dbReference>
<proteinExistence type="evidence at transcript level"/>
<evidence type="ECO:0000250" key="1"/>
<evidence type="ECO:0000250" key="2">
    <source>
        <dbReference type="UniProtKB" id="O35473"/>
    </source>
</evidence>
<evidence type="ECO:0000250" key="3">
    <source>
        <dbReference type="UniProtKB" id="Q13901"/>
    </source>
</evidence>
<evidence type="ECO:0000305" key="4"/>
<reference key="1">
    <citation type="submission" date="2003-05" db="EMBL/GenBank/DDBJ databases">
        <title>Differential display analysis of BCR-ABL-regulated genes.</title>
        <authorList>
            <person name="Guang L."/>
            <person name="Masabumi S."/>
            <person name="Maru Y."/>
        </authorList>
    </citation>
    <scope>NUCLEOTIDE SEQUENCE [MRNA]</scope>
</reference>
<keyword id="KW-0053">Apoptosis</keyword>
<keyword id="KW-0963">Cytoplasm</keyword>
<keyword id="KW-0238">DNA-binding</keyword>
<keyword id="KW-1017">Isopeptide bond</keyword>
<keyword id="KW-0539">Nucleus</keyword>
<keyword id="KW-0597">Phosphoprotein</keyword>
<keyword id="KW-0678">Repressor</keyword>
<keyword id="KW-0694">RNA-binding</keyword>
<keyword id="KW-0698">rRNA processing</keyword>
<keyword id="KW-0804">Transcription</keyword>
<keyword id="KW-0805">Transcription regulation</keyword>
<keyword id="KW-0832">Ubl conjugation</keyword>
<protein>
    <recommendedName>
        <fullName>Nuclear nucleic acid-binding protein C1D</fullName>
    </recommendedName>
</protein>
<comment type="function">
    <text evidence="2 3">Plays a role in the recruitment of the RNA exosome complex to pre-rRNA to mediate the 3'-5' end processing of the 5.8S rRNA; this function may include MPHOSPH6. Can activate PRKDC not only in the presence of linear DNA but also in the presence of supercoiled DNA. Can induce apoptosis in a p53/TP53 dependent manner. May regulate the TRAX/TSN complex formation. Potentiates transcriptional repression by NR1D1 and THRB (By similarity).</text>
</comment>
<comment type="subunit">
    <text evidence="2 3">Monomer and homodimer. Interacts with NR1D1, THRA, THRB, NCOR1 and NCOR2. Associates with the RNA exosome complex (By similarity). Interacts with EXOSC10; the interaction probably mediates the association with the nuclear form of the RNA exosome. The homodimeric form interacts with TSNAX following gamma-radiation. Interacts with RAC3. Associates with the RNA exosome complex.</text>
</comment>
<comment type="subcellular location">
    <subcellularLocation>
        <location evidence="3">Nucleus</location>
    </subcellularLocation>
    <subcellularLocation>
        <location evidence="3">Cytoplasm</location>
    </subcellularLocation>
    <subcellularLocation>
        <location evidence="3">Nucleus</location>
        <location evidence="3">Nucleolus</location>
    </subcellularLocation>
    <text evidence="3">EXOSC10 is required for nucleolar localization. Colocalizes with TSNAX in the nucleus.</text>
</comment>
<comment type="PTM">
    <text evidence="3">Phosphorylated by PRKDC.</text>
</comment>
<comment type="similarity">
    <text evidence="4">Belongs to the C1D family.</text>
</comment>
<feature type="chain" id="PRO_0000316299" description="Nuclear nucleic acid-binding protein C1D">
    <location>
        <begin position="1"/>
        <end position="141"/>
    </location>
</feature>
<feature type="region of interest" description="Required for transcriptional repression" evidence="1">
    <location>
        <begin position="1"/>
        <end position="100"/>
    </location>
</feature>
<feature type="region of interest" description="Interaction with NR1D1" evidence="1">
    <location>
        <begin position="50"/>
        <end position="100"/>
    </location>
</feature>
<feature type="region of interest" description="Interaction with NCOR1 and NCOR2" evidence="1">
    <location>
        <begin position="100"/>
        <end position="141"/>
    </location>
</feature>
<feature type="cross-link" description="Glycyl lysine isopeptide (Lys-Gly) (interchain with G-Cter in SUMO2)" evidence="3">
    <location>
        <position position="119"/>
    </location>
</feature>
<feature type="cross-link" description="Glycyl lysine isopeptide (Lys-Gly) (interchain with G-Cter in SUMO2)" evidence="3">
    <location>
        <position position="126"/>
    </location>
</feature>
<organism>
    <name type="scientific">Cricetulus griseus</name>
    <name type="common">Chinese hamster</name>
    <name type="synonym">Cricetulus barabensis griseus</name>
    <dbReference type="NCBI Taxonomy" id="10029"/>
    <lineage>
        <taxon>Eukaryota</taxon>
        <taxon>Metazoa</taxon>
        <taxon>Chordata</taxon>
        <taxon>Craniata</taxon>
        <taxon>Vertebrata</taxon>
        <taxon>Euteleostomi</taxon>
        <taxon>Mammalia</taxon>
        <taxon>Eutheria</taxon>
        <taxon>Euarchontoglires</taxon>
        <taxon>Glires</taxon>
        <taxon>Rodentia</taxon>
        <taxon>Myomorpha</taxon>
        <taxon>Muroidea</taxon>
        <taxon>Cricetidae</taxon>
        <taxon>Cricetinae</taxon>
        <taxon>Cricetulus</taxon>
    </lineage>
</organism>
<name>C1D_CRIGR</name>
<sequence>MAGGEMNEDYPVEIHESLSALESSLGAVDDMLKTMMSVSRNELLQKLDPLEQAKVDLVSAYTLNSMFWVYLATQGVNPKEHPVKQELERIRVYMNRVKEITDKKKAAKLDRGAASRFVKNALWEPKQKNTPNVANKGKSKH</sequence>
<gene>
    <name type="primary">C1D</name>
</gene>
<accession>Q7TSU0</accession>